<comment type="function">
    <text evidence="1">Directs RNA polymerase II nuclear import.</text>
</comment>
<comment type="subcellular location">
    <subcellularLocation>
        <location evidence="1">Cytoplasm</location>
    </subcellularLocation>
    <subcellularLocation>
        <location evidence="1">Nucleus</location>
    </subcellularLocation>
</comment>
<comment type="similarity">
    <text evidence="3">Belongs to the IWR1/SLC7A6OS family.</text>
</comment>
<organism>
    <name type="scientific">Xenopus tropicalis</name>
    <name type="common">Western clawed frog</name>
    <name type="synonym">Silurana tropicalis</name>
    <dbReference type="NCBI Taxonomy" id="8364"/>
    <lineage>
        <taxon>Eukaryota</taxon>
        <taxon>Metazoa</taxon>
        <taxon>Chordata</taxon>
        <taxon>Craniata</taxon>
        <taxon>Vertebrata</taxon>
        <taxon>Euteleostomi</taxon>
        <taxon>Amphibia</taxon>
        <taxon>Batrachia</taxon>
        <taxon>Anura</taxon>
        <taxon>Pipoidea</taxon>
        <taxon>Pipidae</taxon>
        <taxon>Xenopodinae</taxon>
        <taxon>Xenopus</taxon>
        <taxon>Silurana</taxon>
    </lineage>
</organism>
<name>S7A6O_XENTR</name>
<proteinExistence type="evidence at transcript level"/>
<sequence>MEAAVLRIKRKRGAEPADALLLSCKRLRTENEAQDSSVVITQVFRLATTVKSEKEPLHKYVQAAISCNQSCLALRPSLGSKQRIHEELRASKEAERQVSRYRIISSHRPNSEEDNVNVIGLSQLQDVPSDTKEEEKPTEATKCNISSNFQLFDMVQEEPEQEHLVKETEPETILCNSIRMIRERLTVSEAGRESEHRENMDEYVYDIYYSDAYKHGWIQDILYVQPYTEGQELVYEEHEPDEIYEDEDDENEENNWRNDYPDEEEDSDMEERYIGYYENGDEEEGQACKMYALLEFGDDNDDADLDRFKEDRFG</sequence>
<accession>Q28GL6</accession>
<feature type="chain" id="PRO_0000289173" description="Probable RNA polymerase II nuclear localization protein SLC7A6OS">
    <location>
        <begin position="1"/>
        <end position="314"/>
    </location>
</feature>
<feature type="region of interest" description="Disordered" evidence="2">
    <location>
        <begin position="243"/>
        <end position="269"/>
    </location>
</feature>
<feature type="compositionally biased region" description="Acidic residues" evidence="2">
    <location>
        <begin position="243"/>
        <end position="253"/>
    </location>
</feature>
<protein>
    <recommendedName>
        <fullName>Probable RNA polymerase II nuclear localization protein SLC7A6OS</fullName>
    </recommendedName>
    <alternativeName>
        <fullName>Solute carrier family 7 member 6 opposite strand transcript homolog</fullName>
    </alternativeName>
</protein>
<keyword id="KW-0963">Cytoplasm</keyword>
<keyword id="KW-0539">Nucleus</keyword>
<keyword id="KW-0653">Protein transport</keyword>
<keyword id="KW-1185">Reference proteome</keyword>
<keyword id="KW-0813">Transport</keyword>
<evidence type="ECO:0000250" key="1"/>
<evidence type="ECO:0000256" key="2">
    <source>
        <dbReference type="SAM" id="MobiDB-lite"/>
    </source>
</evidence>
<evidence type="ECO:0000305" key="3"/>
<gene>
    <name type="primary">slc7a6os</name>
    <name type="ORF">TEgg029j19.1</name>
</gene>
<reference key="1">
    <citation type="submission" date="2006-10" db="EMBL/GenBank/DDBJ databases">
        <authorList>
            <consortium name="Sanger Xenopus tropicalis EST/cDNA project"/>
        </authorList>
    </citation>
    <scope>NUCLEOTIDE SEQUENCE [LARGE SCALE MRNA]</scope>
    <source>
        <tissue>Egg</tissue>
    </source>
</reference>
<dbReference type="EMBL" id="CR761340">
    <property type="protein sequence ID" value="CAJ82020.1"/>
    <property type="molecule type" value="mRNA"/>
</dbReference>
<dbReference type="RefSeq" id="NP_001037932.1">
    <property type="nucleotide sequence ID" value="NM_001044467.1"/>
</dbReference>
<dbReference type="FunCoup" id="Q28GL6">
    <property type="interactions" value="3317"/>
</dbReference>
<dbReference type="STRING" id="8364.ENSXETP00000040963"/>
<dbReference type="PaxDb" id="8364-ENSXETP00000014622"/>
<dbReference type="GeneID" id="733552"/>
<dbReference type="KEGG" id="xtr:733552"/>
<dbReference type="AGR" id="Xenbase:XB-GENE-5805704"/>
<dbReference type="CTD" id="84138"/>
<dbReference type="Xenbase" id="XB-GENE-5805704">
    <property type="gene designation" value="slc7a6os"/>
</dbReference>
<dbReference type="eggNOG" id="KOG4852">
    <property type="taxonomic scope" value="Eukaryota"/>
</dbReference>
<dbReference type="HOGENOM" id="CLU_059743_0_0_1"/>
<dbReference type="InParanoid" id="Q28GL6"/>
<dbReference type="OMA" id="DCYNDDE"/>
<dbReference type="OrthoDB" id="6255506at2759"/>
<dbReference type="PhylomeDB" id="Q28GL6"/>
<dbReference type="TreeFam" id="TF324404"/>
<dbReference type="Proteomes" id="UP000008143">
    <property type="component" value="Chromosome 4"/>
</dbReference>
<dbReference type="Bgee" id="ENSXETG00000006675">
    <property type="expression patterns" value="Expressed in brain and 8 other cell types or tissues"/>
</dbReference>
<dbReference type="ExpressionAtlas" id="Q28GL6">
    <property type="expression patterns" value="baseline"/>
</dbReference>
<dbReference type="GO" id="GO:0005737">
    <property type="term" value="C:cytoplasm"/>
    <property type="evidence" value="ECO:0007669"/>
    <property type="project" value="UniProtKB-SubCell"/>
</dbReference>
<dbReference type="GO" id="GO:0005634">
    <property type="term" value="C:nucleus"/>
    <property type="evidence" value="ECO:0007669"/>
    <property type="project" value="UniProtKB-SubCell"/>
</dbReference>
<dbReference type="GO" id="GO:0015031">
    <property type="term" value="P:protein transport"/>
    <property type="evidence" value="ECO:0007669"/>
    <property type="project" value="UniProtKB-KW"/>
</dbReference>
<dbReference type="InterPro" id="IPR040218">
    <property type="entry name" value="SLC7A6OS"/>
</dbReference>
<dbReference type="InterPro" id="IPR013883">
    <property type="entry name" value="TF_Iwr1_dom"/>
</dbReference>
<dbReference type="PANTHER" id="PTHR31196">
    <property type="entry name" value="RNA POLYMERASE II NUCLEAR LOCALIZATION PROTEIN SLC7A6OS-RELATED"/>
    <property type="match status" value="1"/>
</dbReference>
<dbReference type="PANTHER" id="PTHR31196:SF2">
    <property type="entry name" value="RNA POLYMERASE II NUCLEAR LOCALIZATION PROTEIN SLC7A6OS-RELATED"/>
    <property type="match status" value="1"/>
</dbReference>
<dbReference type="Pfam" id="PF08574">
    <property type="entry name" value="Iwr1"/>
    <property type="match status" value="1"/>
</dbReference>